<sequence length="463" mass="50179">MENSLKSSGKPLAAPKVGMVSLGCPKALVDSEQIITQLRAEGYEISGTYDGADLVVVNTCGFIDEAVQESLDAIGEALAENGKVIVTGCLGAKKSASGSGLIAEVHPKVLAVTGPHAVGEVMQAVHSHLPKPHDPFVDLVPAAGIKLTPRHYAYLKISEGCNHRCSFCIIPSMRGELVSRPVAEVMLEAENLFKSGVKELLVISQDTSAYGVDVKYRTGFWNGRPLKTRMTELVGALGELAAQYGAWVRLHYVYPYPHVDEIIPMMAQGPLKGHVLPYLDVPFQHAHPEVLKRMKRPANAERVLERVQKWREICPDLTIRSTFIAGFPGETDAQFETLLDFIRDAELDRVGCFAYSPVEGASANALDGALPDDVREARRARFMEVAEEVSAARIARKIGKTLKVLIDEVNAEGGIGRTAADAPEIDGVVYVEPAAKASKRYKVGEFVSVKITGADSHDLWGEV</sequence>
<evidence type="ECO:0000255" key="1">
    <source>
        <dbReference type="HAMAP-Rule" id="MF_01865"/>
    </source>
</evidence>
<evidence type="ECO:0000255" key="2">
    <source>
        <dbReference type="PROSITE-ProRule" id="PRU01266"/>
    </source>
</evidence>
<gene>
    <name evidence="1" type="primary">rimO</name>
    <name type="ordered locus">BURPS668_2162</name>
</gene>
<feature type="chain" id="PRO_0000374744" description="Ribosomal protein uS12 methylthiotransferase RimO">
    <location>
        <begin position="1"/>
        <end position="463"/>
    </location>
</feature>
<feature type="domain" description="MTTase N-terminal" evidence="1">
    <location>
        <begin position="15"/>
        <end position="130"/>
    </location>
</feature>
<feature type="domain" description="Radical SAM core" evidence="2">
    <location>
        <begin position="147"/>
        <end position="392"/>
    </location>
</feature>
<feature type="domain" description="TRAM" evidence="1">
    <location>
        <begin position="395"/>
        <end position="463"/>
    </location>
</feature>
<feature type="binding site" evidence="1">
    <location>
        <position position="24"/>
    </location>
    <ligand>
        <name>[4Fe-4S] cluster</name>
        <dbReference type="ChEBI" id="CHEBI:49883"/>
        <label>1</label>
    </ligand>
</feature>
<feature type="binding site" evidence="1">
    <location>
        <position position="60"/>
    </location>
    <ligand>
        <name>[4Fe-4S] cluster</name>
        <dbReference type="ChEBI" id="CHEBI:49883"/>
        <label>1</label>
    </ligand>
</feature>
<feature type="binding site" evidence="1">
    <location>
        <position position="89"/>
    </location>
    <ligand>
        <name>[4Fe-4S] cluster</name>
        <dbReference type="ChEBI" id="CHEBI:49883"/>
        <label>1</label>
    </ligand>
</feature>
<feature type="binding site" evidence="1">
    <location>
        <position position="161"/>
    </location>
    <ligand>
        <name>[4Fe-4S] cluster</name>
        <dbReference type="ChEBI" id="CHEBI:49883"/>
        <label>2</label>
        <note>4Fe-4S-S-AdoMet</note>
    </ligand>
</feature>
<feature type="binding site" evidence="1">
    <location>
        <position position="165"/>
    </location>
    <ligand>
        <name>[4Fe-4S] cluster</name>
        <dbReference type="ChEBI" id="CHEBI:49883"/>
        <label>2</label>
        <note>4Fe-4S-S-AdoMet</note>
    </ligand>
</feature>
<feature type="binding site" evidence="1">
    <location>
        <position position="168"/>
    </location>
    <ligand>
        <name>[4Fe-4S] cluster</name>
        <dbReference type="ChEBI" id="CHEBI:49883"/>
        <label>2</label>
        <note>4Fe-4S-S-AdoMet</note>
    </ligand>
</feature>
<organism>
    <name type="scientific">Burkholderia pseudomallei (strain 668)</name>
    <dbReference type="NCBI Taxonomy" id="320373"/>
    <lineage>
        <taxon>Bacteria</taxon>
        <taxon>Pseudomonadati</taxon>
        <taxon>Pseudomonadota</taxon>
        <taxon>Betaproteobacteria</taxon>
        <taxon>Burkholderiales</taxon>
        <taxon>Burkholderiaceae</taxon>
        <taxon>Burkholderia</taxon>
        <taxon>pseudomallei group</taxon>
    </lineage>
</organism>
<comment type="function">
    <text evidence="1">Catalyzes the methylthiolation of an aspartic acid residue of ribosomal protein uS12.</text>
</comment>
<comment type="catalytic activity">
    <reaction evidence="1">
        <text>L-aspartate(89)-[ribosomal protein uS12]-hydrogen + (sulfur carrier)-SH + AH2 + 2 S-adenosyl-L-methionine = 3-methylsulfanyl-L-aspartate(89)-[ribosomal protein uS12]-hydrogen + (sulfur carrier)-H + 5'-deoxyadenosine + L-methionine + A + S-adenosyl-L-homocysteine + 2 H(+)</text>
        <dbReference type="Rhea" id="RHEA:37087"/>
        <dbReference type="Rhea" id="RHEA-COMP:10460"/>
        <dbReference type="Rhea" id="RHEA-COMP:10461"/>
        <dbReference type="Rhea" id="RHEA-COMP:14737"/>
        <dbReference type="Rhea" id="RHEA-COMP:14739"/>
        <dbReference type="ChEBI" id="CHEBI:13193"/>
        <dbReference type="ChEBI" id="CHEBI:15378"/>
        <dbReference type="ChEBI" id="CHEBI:17319"/>
        <dbReference type="ChEBI" id="CHEBI:17499"/>
        <dbReference type="ChEBI" id="CHEBI:29917"/>
        <dbReference type="ChEBI" id="CHEBI:29961"/>
        <dbReference type="ChEBI" id="CHEBI:57844"/>
        <dbReference type="ChEBI" id="CHEBI:57856"/>
        <dbReference type="ChEBI" id="CHEBI:59789"/>
        <dbReference type="ChEBI" id="CHEBI:64428"/>
        <dbReference type="ChEBI" id="CHEBI:73599"/>
        <dbReference type="EC" id="2.8.4.4"/>
    </reaction>
</comment>
<comment type="cofactor">
    <cofactor evidence="1">
        <name>[4Fe-4S] cluster</name>
        <dbReference type="ChEBI" id="CHEBI:49883"/>
    </cofactor>
    <text evidence="1">Binds 2 [4Fe-4S] clusters. One cluster is coordinated with 3 cysteines and an exchangeable S-adenosyl-L-methionine.</text>
</comment>
<comment type="subcellular location">
    <subcellularLocation>
        <location evidence="1">Cytoplasm</location>
    </subcellularLocation>
</comment>
<comment type="similarity">
    <text evidence="1">Belongs to the methylthiotransferase family. RimO subfamily.</text>
</comment>
<protein>
    <recommendedName>
        <fullName evidence="1">Ribosomal protein uS12 methylthiotransferase RimO</fullName>
        <shortName evidence="1">uS12 MTTase</shortName>
        <shortName evidence="1">uS12 methylthiotransferase</shortName>
        <ecNumber evidence="1">2.8.4.4</ecNumber>
    </recommendedName>
    <alternativeName>
        <fullName evidence="1">Ribosomal protein uS12 (aspartate-C(3))-methylthiotransferase</fullName>
    </alternativeName>
    <alternativeName>
        <fullName evidence="1">Ribosome maturation factor RimO</fullName>
    </alternativeName>
</protein>
<reference key="1">
    <citation type="journal article" date="2010" name="Genome Biol. Evol.">
        <title>Continuing evolution of Burkholderia mallei through genome reduction and large-scale rearrangements.</title>
        <authorList>
            <person name="Losada L."/>
            <person name="Ronning C.M."/>
            <person name="DeShazer D."/>
            <person name="Woods D."/>
            <person name="Fedorova N."/>
            <person name="Kim H.S."/>
            <person name="Shabalina S.A."/>
            <person name="Pearson T.R."/>
            <person name="Brinkac L."/>
            <person name="Tan P."/>
            <person name="Nandi T."/>
            <person name="Crabtree J."/>
            <person name="Badger J."/>
            <person name="Beckstrom-Sternberg S."/>
            <person name="Saqib M."/>
            <person name="Schutzer S.E."/>
            <person name="Keim P."/>
            <person name="Nierman W.C."/>
        </authorList>
    </citation>
    <scope>NUCLEOTIDE SEQUENCE [LARGE SCALE GENOMIC DNA]</scope>
    <source>
        <strain>668</strain>
    </source>
</reference>
<proteinExistence type="inferred from homology"/>
<dbReference type="EC" id="2.8.4.4" evidence="1"/>
<dbReference type="EMBL" id="CP000570">
    <property type="protein sequence ID" value="ABN83904.1"/>
    <property type="molecule type" value="Genomic_DNA"/>
</dbReference>
<dbReference type="RefSeq" id="WP_011851725.1">
    <property type="nucleotide sequence ID" value="NC_009074.1"/>
</dbReference>
<dbReference type="SMR" id="A3NA26"/>
<dbReference type="KEGG" id="bpd:BURPS668_2162"/>
<dbReference type="HOGENOM" id="CLU_018697_0_0_4"/>
<dbReference type="GO" id="GO:0005829">
    <property type="term" value="C:cytosol"/>
    <property type="evidence" value="ECO:0007669"/>
    <property type="project" value="TreeGrafter"/>
</dbReference>
<dbReference type="GO" id="GO:0051539">
    <property type="term" value="F:4 iron, 4 sulfur cluster binding"/>
    <property type="evidence" value="ECO:0007669"/>
    <property type="project" value="UniProtKB-UniRule"/>
</dbReference>
<dbReference type="GO" id="GO:0035599">
    <property type="term" value="F:aspartic acid methylthiotransferase activity"/>
    <property type="evidence" value="ECO:0007669"/>
    <property type="project" value="TreeGrafter"/>
</dbReference>
<dbReference type="GO" id="GO:0046872">
    <property type="term" value="F:metal ion binding"/>
    <property type="evidence" value="ECO:0007669"/>
    <property type="project" value="UniProtKB-KW"/>
</dbReference>
<dbReference type="GO" id="GO:0103039">
    <property type="term" value="F:protein methylthiotransferase activity"/>
    <property type="evidence" value="ECO:0007669"/>
    <property type="project" value="UniProtKB-EC"/>
</dbReference>
<dbReference type="GO" id="GO:0006400">
    <property type="term" value="P:tRNA modification"/>
    <property type="evidence" value="ECO:0007669"/>
    <property type="project" value="InterPro"/>
</dbReference>
<dbReference type="CDD" id="cd01335">
    <property type="entry name" value="Radical_SAM"/>
    <property type="match status" value="1"/>
</dbReference>
<dbReference type="FunFam" id="3.40.50.12160:FF:000002">
    <property type="entry name" value="Ribosomal protein S12 methylthiotransferase RimO"/>
    <property type="match status" value="1"/>
</dbReference>
<dbReference type="FunFam" id="3.80.30.20:FF:000001">
    <property type="entry name" value="tRNA-2-methylthio-N(6)-dimethylallyladenosine synthase 2"/>
    <property type="match status" value="1"/>
</dbReference>
<dbReference type="Gene3D" id="3.40.50.12160">
    <property type="entry name" value="Methylthiotransferase, N-terminal domain"/>
    <property type="match status" value="1"/>
</dbReference>
<dbReference type="Gene3D" id="2.40.50.140">
    <property type="entry name" value="Nucleic acid-binding proteins"/>
    <property type="match status" value="1"/>
</dbReference>
<dbReference type="Gene3D" id="3.80.30.20">
    <property type="entry name" value="tm_1862 like domain"/>
    <property type="match status" value="1"/>
</dbReference>
<dbReference type="HAMAP" id="MF_01865">
    <property type="entry name" value="MTTase_RimO"/>
    <property type="match status" value="1"/>
</dbReference>
<dbReference type="InterPro" id="IPR006638">
    <property type="entry name" value="Elp3/MiaA/NifB-like_rSAM"/>
</dbReference>
<dbReference type="InterPro" id="IPR005839">
    <property type="entry name" value="Methylthiotransferase"/>
</dbReference>
<dbReference type="InterPro" id="IPR020612">
    <property type="entry name" value="Methylthiotransferase_CS"/>
</dbReference>
<dbReference type="InterPro" id="IPR013848">
    <property type="entry name" value="Methylthiotransferase_N"/>
</dbReference>
<dbReference type="InterPro" id="IPR038135">
    <property type="entry name" value="Methylthiotransferase_N_sf"/>
</dbReference>
<dbReference type="InterPro" id="IPR012340">
    <property type="entry name" value="NA-bd_OB-fold"/>
</dbReference>
<dbReference type="InterPro" id="IPR005840">
    <property type="entry name" value="Ribosomal_uS12_MeSTrfase_RimO"/>
</dbReference>
<dbReference type="InterPro" id="IPR007197">
    <property type="entry name" value="rSAM"/>
</dbReference>
<dbReference type="InterPro" id="IPR023404">
    <property type="entry name" value="rSAM_horseshoe"/>
</dbReference>
<dbReference type="InterPro" id="IPR002792">
    <property type="entry name" value="TRAM_dom"/>
</dbReference>
<dbReference type="NCBIfam" id="TIGR01125">
    <property type="entry name" value="30S ribosomal protein S12 methylthiotransferase RimO"/>
    <property type="match status" value="1"/>
</dbReference>
<dbReference type="NCBIfam" id="TIGR00089">
    <property type="entry name" value="MiaB/RimO family radical SAM methylthiotransferase"/>
    <property type="match status" value="1"/>
</dbReference>
<dbReference type="PANTHER" id="PTHR43837">
    <property type="entry name" value="RIBOSOMAL PROTEIN S12 METHYLTHIOTRANSFERASE RIMO"/>
    <property type="match status" value="1"/>
</dbReference>
<dbReference type="PANTHER" id="PTHR43837:SF1">
    <property type="entry name" value="RIBOSOMAL PROTEIN US12 METHYLTHIOTRANSFERASE RIMO"/>
    <property type="match status" value="1"/>
</dbReference>
<dbReference type="Pfam" id="PF04055">
    <property type="entry name" value="Radical_SAM"/>
    <property type="match status" value="1"/>
</dbReference>
<dbReference type="Pfam" id="PF18693">
    <property type="entry name" value="TRAM_2"/>
    <property type="match status" value="1"/>
</dbReference>
<dbReference type="Pfam" id="PF00919">
    <property type="entry name" value="UPF0004"/>
    <property type="match status" value="1"/>
</dbReference>
<dbReference type="SFLD" id="SFLDG01082">
    <property type="entry name" value="B12-binding_domain_containing"/>
    <property type="match status" value="1"/>
</dbReference>
<dbReference type="SFLD" id="SFLDS00029">
    <property type="entry name" value="Radical_SAM"/>
    <property type="match status" value="1"/>
</dbReference>
<dbReference type="SFLD" id="SFLDF00274">
    <property type="entry name" value="ribosomal_protein_S12_methylth"/>
    <property type="match status" value="1"/>
</dbReference>
<dbReference type="SMART" id="SM00729">
    <property type="entry name" value="Elp3"/>
    <property type="match status" value="1"/>
</dbReference>
<dbReference type="SUPFAM" id="SSF102114">
    <property type="entry name" value="Radical SAM enzymes"/>
    <property type="match status" value="1"/>
</dbReference>
<dbReference type="PROSITE" id="PS51449">
    <property type="entry name" value="MTTASE_N"/>
    <property type="match status" value="1"/>
</dbReference>
<dbReference type="PROSITE" id="PS01278">
    <property type="entry name" value="MTTASE_RADICAL"/>
    <property type="match status" value="1"/>
</dbReference>
<dbReference type="PROSITE" id="PS51918">
    <property type="entry name" value="RADICAL_SAM"/>
    <property type="match status" value="1"/>
</dbReference>
<dbReference type="PROSITE" id="PS50926">
    <property type="entry name" value="TRAM"/>
    <property type="match status" value="1"/>
</dbReference>
<accession>A3NA26</accession>
<keyword id="KW-0004">4Fe-4S</keyword>
<keyword id="KW-0963">Cytoplasm</keyword>
<keyword id="KW-0408">Iron</keyword>
<keyword id="KW-0411">Iron-sulfur</keyword>
<keyword id="KW-0479">Metal-binding</keyword>
<keyword id="KW-0949">S-adenosyl-L-methionine</keyword>
<keyword id="KW-0808">Transferase</keyword>
<name>RIMO_BURP6</name>